<proteinExistence type="evidence at protein level"/>
<organism>
    <name type="scientific">Schizosaccharomyces pombe (strain 972 / ATCC 24843)</name>
    <name type="common">Fission yeast</name>
    <dbReference type="NCBI Taxonomy" id="284812"/>
    <lineage>
        <taxon>Eukaryota</taxon>
        <taxon>Fungi</taxon>
        <taxon>Dikarya</taxon>
        <taxon>Ascomycota</taxon>
        <taxon>Taphrinomycotina</taxon>
        <taxon>Schizosaccharomycetes</taxon>
        <taxon>Schizosaccharomycetales</taxon>
        <taxon>Schizosaccharomycetaceae</taxon>
        <taxon>Schizosaccharomyces</taxon>
    </lineage>
</organism>
<dbReference type="EMBL" id="AY034142">
    <property type="protein sequence ID" value="AAK59993.1"/>
    <property type="status" value="ALT_INIT"/>
    <property type="molecule type" value="Genomic_DNA"/>
</dbReference>
<dbReference type="EMBL" id="CU329671">
    <property type="protein sequence ID" value="CAA22681.2"/>
    <property type="molecule type" value="Genomic_DNA"/>
</dbReference>
<dbReference type="PIR" id="T39387">
    <property type="entry name" value="T39387"/>
</dbReference>
<dbReference type="RefSeq" id="NP_595954.2">
    <property type="nucleotide sequence ID" value="NM_001021863.2"/>
</dbReference>
<dbReference type="SMR" id="O94504"/>
<dbReference type="BioGRID" id="276444">
    <property type="interactions" value="54"/>
</dbReference>
<dbReference type="FunCoup" id="O94504">
    <property type="interactions" value="16"/>
</dbReference>
<dbReference type="STRING" id="284812.O94504"/>
<dbReference type="iPTMnet" id="O94504"/>
<dbReference type="PaxDb" id="4896-SPBC12D12.07c.1"/>
<dbReference type="EnsemblFungi" id="SPBC12D12.07c.1">
    <property type="protein sequence ID" value="SPBC12D12.07c.1:pep"/>
    <property type="gene ID" value="SPBC12D12.07c"/>
</dbReference>
<dbReference type="GeneID" id="2539898"/>
<dbReference type="KEGG" id="spo:2539898"/>
<dbReference type="PomBase" id="SPBC12D12.07c">
    <property type="gene designation" value="trx2"/>
</dbReference>
<dbReference type="VEuPathDB" id="FungiDB:SPBC12D12.07c"/>
<dbReference type="eggNOG" id="KOG0907">
    <property type="taxonomic scope" value="Eukaryota"/>
</dbReference>
<dbReference type="HOGENOM" id="CLU_090389_14_5_1"/>
<dbReference type="InParanoid" id="O94504"/>
<dbReference type="OMA" id="FIDPFMP"/>
<dbReference type="Reactome" id="R-SPO-2559580">
    <property type="pathway name" value="Oxidative Stress Induced Senescence"/>
</dbReference>
<dbReference type="Reactome" id="R-SPO-3299685">
    <property type="pathway name" value="Detoxification of Reactive Oxygen Species"/>
</dbReference>
<dbReference type="Reactome" id="R-SPO-499943">
    <property type="pathway name" value="Interconversion of nucleotide di- and triphosphates"/>
</dbReference>
<dbReference type="Reactome" id="R-SPO-5628897">
    <property type="pathway name" value="TP53 Regulates Metabolic Genes"/>
</dbReference>
<dbReference type="Reactome" id="R-SPO-844456">
    <property type="pathway name" value="The NLRP3 inflammasome"/>
</dbReference>
<dbReference type="PRO" id="PR:O94504"/>
<dbReference type="Proteomes" id="UP000002485">
    <property type="component" value="Chromosome II"/>
</dbReference>
<dbReference type="GO" id="GO:0005739">
    <property type="term" value="C:mitochondrion"/>
    <property type="evidence" value="ECO:0000314"/>
    <property type="project" value="PomBase"/>
</dbReference>
<dbReference type="GO" id="GO:0015035">
    <property type="term" value="F:protein-disulfide reductase activity"/>
    <property type="evidence" value="ECO:0000315"/>
    <property type="project" value="PomBase"/>
</dbReference>
<dbReference type="GO" id="GO:0045454">
    <property type="term" value="P:cell redox homeostasis"/>
    <property type="evidence" value="ECO:0000315"/>
    <property type="project" value="PomBase"/>
</dbReference>
<dbReference type="GO" id="GO:1990748">
    <property type="term" value="P:cellular detoxification"/>
    <property type="evidence" value="ECO:0000303"/>
    <property type="project" value="PomBase"/>
</dbReference>
<dbReference type="CDD" id="cd02947">
    <property type="entry name" value="TRX_family"/>
    <property type="match status" value="1"/>
</dbReference>
<dbReference type="Gene3D" id="3.40.30.10">
    <property type="entry name" value="Glutaredoxin"/>
    <property type="match status" value="1"/>
</dbReference>
<dbReference type="InterPro" id="IPR036249">
    <property type="entry name" value="Thioredoxin-like_sf"/>
</dbReference>
<dbReference type="InterPro" id="IPR017937">
    <property type="entry name" value="Thioredoxin_CS"/>
</dbReference>
<dbReference type="InterPro" id="IPR013766">
    <property type="entry name" value="Thioredoxin_domain"/>
</dbReference>
<dbReference type="PANTHER" id="PTHR46115">
    <property type="entry name" value="THIOREDOXIN-LIKE PROTEIN 1"/>
    <property type="match status" value="1"/>
</dbReference>
<dbReference type="Pfam" id="PF00085">
    <property type="entry name" value="Thioredoxin"/>
    <property type="match status" value="1"/>
</dbReference>
<dbReference type="PRINTS" id="PR00421">
    <property type="entry name" value="THIOREDOXIN"/>
</dbReference>
<dbReference type="SUPFAM" id="SSF52833">
    <property type="entry name" value="Thioredoxin-like"/>
    <property type="match status" value="1"/>
</dbReference>
<dbReference type="PROSITE" id="PS00194">
    <property type="entry name" value="THIOREDOXIN_1"/>
    <property type="match status" value="1"/>
</dbReference>
<dbReference type="PROSITE" id="PS51352">
    <property type="entry name" value="THIOREDOXIN_2"/>
    <property type="match status" value="1"/>
</dbReference>
<gene>
    <name type="primary">trx2</name>
    <name type="ORF">SPBC12D12.07c</name>
</gene>
<sequence>MRGFIANSLKPHMRSFALRRSFTSSRILRKVNAVESFGDYNTRISADKVTVVDFYADWCGPCKYLKPFLEKLSEQNQKASFIAVNADKFSDIAQKNGVYALPTMVLFRKGQELDRIVGADVKTLSSLLAKYQE</sequence>
<comment type="function">
    <text evidence="4 6">Disulfide reductase which serves multiple functions in mitochondria, protecting mitochondrial components against thiol-oxidative damage as a thiol-disulfide oxidoreductase, and supporting urea cycle and respiration in mitochondria in a manner independent of active site thiols.</text>
</comment>
<comment type="subunit">
    <text evidence="6">Interacts with arg3.</text>
</comment>
<comment type="subcellular location">
    <subcellularLocation>
        <location evidence="5">Mitochondrion</location>
    </subcellularLocation>
</comment>
<comment type="induction">
    <text evidence="4">By aluminum chloride and ferrous chloride.</text>
</comment>
<comment type="disruption phenotype">
    <text evidence="6">Leads to auxotrophy for arginine and cysteine.</text>
</comment>
<comment type="similarity">
    <text evidence="2">Belongs to the thioredoxin family.</text>
</comment>
<comment type="sequence caution" evidence="7">
    <conflict type="erroneous initiation">
        <sequence resource="EMBL-CDS" id="AAK59993"/>
    </conflict>
    <text>Truncated N-terminus.</text>
</comment>
<evidence type="ECO:0000250" key="1"/>
<evidence type="ECO:0000255" key="2"/>
<evidence type="ECO:0000255" key="3">
    <source>
        <dbReference type="PROSITE-ProRule" id="PRU00691"/>
    </source>
</evidence>
<evidence type="ECO:0000269" key="4">
    <source>
    </source>
</evidence>
<evidence type="ECO:0000269" key="5">
    <source>
    </source>
</evidence>
<evidence type="ECO:0000269" key="6">
    <source>
    </source>
</evidence>
<evidence type="ECO:0000305" key="7"/>
<evidence type="ECO:0000312" key="8">
    <source>
        <dbReference type="EMBL" id="AAK59993.1"/>
    </source>
</evidence>
<reference evidence="7 8" key="1">
    <citation type="journal article" date="2002" name="Biochim. Biophys. Acta">
        <title>Characterization and regulation of a second gene encoding thioredoxin from the fission yeast.</title>
        <authorList>
            <person name="Lee Y.-J."/>
            <person name="Cho Y.-W."/>
            <person name="Kim D."/>
            <person name="Park E.-H."/>
            <person name="Fuchs J.A."/>
            <person name="Lim C.-J."/>
        </authorList>
    </citation>
    <scope>NUCLEOTIDE SEQUENCE [GENOMIC DNA]</scope>
    <scope>FUNCTION</scope>
    <scope>INDUCTION</scope>
</reference>
<reference key="2">
    <citation type="journal article" date="2002" name="Nature">
        <title>The genome sequence of Schizosaccharomyces pombe.</title>
        <authorList>
            <person name="Wood V."/>
            <person name="Gwilliam R."/>
            <person name="Rajandream M.A."/>
            <person name="Lyne M.H."/>
            <person name="Lyne R."/>
            <person name="Stewart A."/>
            <person name="Sgouros J.G."/>
            <person name="Peat N."/>
            <person name="Hayles J."/>
            <person name="Baker S.G."/>
            <person name="Basham D."/>
            <person name="Bowman S."/>
            <person name="Brooks K."/>
            <person name="Brown D."/>
            <person name="Brown S."/>
            <person name="Chillingworth T."/>
            <person name="Churcher C.M."/>
            <person name="Collins M."/>
            <person name="Connor R."/>
            <person name="Cronin A."/>
            <person name="Davis P."/>
            <person name="Feltwell T."/>
            <person name="Fraser A."/>
            <person name="Gentles S."/>
            <person name="Goble A."/>
            <person name="Hamlin N."/>
            <person name="Harris D.E."/>
            <person name="Hidalgo J."/>
            <person name="Hodgson G."/>
            <person name="Holroyd S."/>
            <person name="Hornsby T."/>
            <person name="Howarth S."/>
            <person name="Huckle E.J."/>
            <person name="Hunt S."/>
            <person name="Jagels K."/>
            <person name="James K.D."/>
            <person name="Jones L."/>
            <person name="Jones M."/>
            <person name="Leather S."/>
            <person name="McDonald S."/>
            <person name="McLean J."/>
            <person name="Mooney P."/>
            <person name="Moule S."/>
            <person name="Mungall K.L."/>
            <person name="Murphy L.D."/>
            <person name="Niblett D."/>
            <person name="Odell C."/>
            <person name="Oliver K."/>
            <person name="O'Neil S."/>
            <person name="Pearson D."/>
            <person name="Quail M.A."/>
            <person name="Rabbinowitsch E."/>
            <person name="Rutherford K.M."/>
            <person name="Rutter S."/>
            <person name="Saunders D."/>
            <person name="Seeger K."/>
            <person name="Sharp S."/>
            <person name="Skelton J."/>
            <person name="Simmonds M.N."/>
            <person name="Squares R."/>
            <person name="Squares S."/>
            <person name="Stevens K."/>
            <person name="Taylor K."/>
            <person name="Taylor R.G."/>
            <person name="Tivey A."/>
            <person name="Walsh S.V."/>
            <person name="Warren T."/>
            <person name="Whitehead S."/>
            <person name="Woodward J.R."/>
            <person name="Volckaert G."/>
            <person name="Aert R."/>
            <person name="Robben J."/>
            <person name="Grymonprez B."/>
            <person name="Weltjens I."/>
            <person name="Vanstreels E."/>
            <person name="Rieger M."/>
            <person name="Schaefer M."/>
            <person name="Mueller-Auer S."/>
            <person name="Gabel C."/>
            <person name="Fuchs M."/>
            <person name="Duesterhoeft A."/>
            <person name="Fritzc C."/>
            <person name="Holzer E."/>
            <person name="Moestl D."/>
            <person name="Hilbert H."/>
            <person name="Borzym K."/>
            <person name="Langer I."/>
            <person name="Beck A."/>
            <person name="Lehrach H."/>
            <person name="Reinhardt R."/>
            <person name="Pohl T.M."/>
            <person name="Eger P."/>
            <person name="Zimmermann W."/>
            <person name="Wedler H."/>
            <person name="Wambutt R."/>
            <person name="Purnelle B."/>
            <person name="Goffeau A."/>
            <person name="Cadieu E."/>
            <person name="Dreano S."/>
            <person name="Gloux S."/>
            <person name="Lelaure V."/>
            <person name="Mottier S."/>
            <person name="Galibert F."/>
            <person name="Aves S.J."/>
            <person name="Xiang Z."/>
            <person name="Hunt C."/>
            <person name="Moore K."/>
            <person name="Hurst S.M."/>
            <person name="Lucas M."/>
            <person name="Rochet M."/>
            <person name="Gaillardin C."/>
            <person name="Tallada V.A."/>
            <person name="Garzon A."/>
            <person name="Thode G."/>
            <person name="Daga R.R."/>
            <person name="Cruzado L."/>
            <person name="Jimenez J."/>
            <person name="Sanchez M."/>
            <person name="del Rey F."/>
            <person name="Benito J."/>
            <person name="Dominguez A."/>
            <person name="Revuelta J.L."/>
            <person name="Moreno S."/>
            <person name="Armstrong J."/>
            <person name="Forsburg S.L."/>
            <person name="Cerutti L."/>
            <person name="Lowe T."/>
            <person name="McCombie W.R."/>
            <person name="Paulsen I."/>
            <person name="Potashkin J."/>
            <person name="Shpakovski G.V."/>
            <person name="Ussery D."/>
            <person name="Barrell B.G."/>
            <person name="Nurse P."/>
        </authorList>
    </citation>
    <scope>NUCLEOTIDE SEQUENCE [LARGE SCALE GENOMIC DNA]</scope>
    <source>
        <strain>972 / ATCC 24843</strain>
    </source>
</reference>
<reference key="3">
    <citation type="journal article" date="2011" name="Science">
        <title>Comparative functional genomics of the fission yeasts.</title>
        <authorList>
            <person name="Rhind N."/>
            <person name="Chen Z."/>
            <person name="Yassour M."/>
            <person name="Thompson D.A."/>
            <person name="Haas B.J."/>
            <person name="Habib N."/>
            <person name="Wapinski I."/>
            <person name="Roy S."/>
            <person name="Lin M.F."/>
            <person name="Heiman D.I."/>
            <person name="Young S.K."/>
            <person name="Furuya K."/>
            <person name="Guo Y."/>
            <person name="Pidoux A."/>
            <person name="Chen H.M."/>
            <person name="Robbertse B."/>
            <person name="Goldberg J.M."/>
            <person name="Aoki K."/>
            <person name="Bayne E.H."/>
            <person name="Berlin A.M."/>
            <person name="Desjardins C.A."/>
            <person name="Dobbs E."/>
            <person name="Dukaj L."/>
            <person name="Fan L."/>
            <person name="FitzGerald M.G."/>
            <person name="French C."/>
            <person name="Gujja S."/>
            <person name="Hansen K."/>
            <person name="Keifenheim D."/>
            <person name="Levin J.Z."/>
            <person name="Mosher R.A."/>
            <person name="Mueller C.A."/>
            <person name="Pfiffner J."/>
            <person name="Priest M."/>
            <person name="Russ C."/>
            <person name="Smialowska A."/>
            <person name="Swoboda P."/>
            <person name="Sykes S.M."/>
            <person name="Vaughn M."/>
            <person name="Vengrova S."/>
            <person name="Yoder R."/>
            <person name="Zeng Q."/>
            <person name="Allshire R."/>
            <person name="Baulcombe D."/>
            <person name="Birren B.W."/>
            <person name="Brown W."/>
            <person name="Ekwall K."/>
            <person name="Kellis M."/>
            <person name="Leatherwood J."/>
            <person name="Levin H."/>
            <person name="Margalit H."/>
            <person name="Martienssen R."/>
            <person name="Nieduszynski C.A."/>
            <person name="Spatafora J.W."/>
            <person name="Friedman N."/>
            <person name="Dalgaard J.Z."/>
            <person name="Baumann P."/>
            <person name="Niki H."/>
            <person name="Regev A."/>
            <person name="Nusbaum C."/>
        </authorList>
    </citation>
    <scope>REVISION OF GENE MODEL</scope>
</reference>
<reference evidence="7" key="4">
    <citation type="journal article" date="2006" name="Nat. Biotechnol.">
        <title>ORFeome cloning and global analysis of protein localization in the fission yeast Schizosaccharomyces pombe.</title>
        <authorList>
            <person name="Matsuyama A."/>
            <person name="Arai R."/>
            <person name="Yashiroda Y."/>
            <person name="Shirai A."/>
            <person name="Kamata A."/>
            <person name="Sekido S."/>
            <person name="Kobayashi Y."/>
            <person name="Hashimoto A."/>
            <person name="Hamamoto M."/>
            <person name="Hiraoka Y."/>
            <person name="Horinouchi S."/>
            <person name="Yoshida M."/>
        </authorList>
    </citation>
    <scope>SUBCELLULAR LOCATION [LARGE SCALE ANALYSIS]</scope>
</reference>
<reference key="5">
    <citation type="journal article" date="2008" name="Eukaryot. Cell">
        <title>Thiol-independent action of mitochondrial thioredoxin to support the urea cycle of arginine biosynthesis in Schizosaccharomyces pombe.</title>
        <authorList>
            <person name="Song J.Y."/>
            <person name="Kim K.D."/>
            <person name="Roe J.H."/>
        </authorList>
    </citation>
    <scope>DISRUPTION PHENOTYPE</scope>
    <scope>FUNCTION</scope>
    <scope>INTERACTION WITH ARG3</scope>
</reference>
<keyword id="KW-1015">Disulfide bond</keyword>
<keyword id="KW-0249">Electron transport</keyword>
<keyword id="KW-0496">Mitochondrion</keyword>
<keyword id="KW-0676">Redox-active center</keyword>
<keyword id="KW-1185">Reference proteome</keyword>
<keyword id="KW-0346">Stress response</keyword>
<keyword id="KW-0809">Transit peptide</keyword>
<keyword id="KW-0813">Transport</keyword>
<feature type="transit peptide" description="Mitochondrion" evidence="2">
    <location>
        <begin position="1"/>
        <end position="29"/>
    </location>
</feature>
<feature type="chain" id="PRO_0000337144" description="Thioredoxin-2, mitochondrial">
    <location>
        <begin position="30"/>
        <end position="133"/>
    </location>
</feature>
<feature type="domain" description="Thioredoxin" evidence="3">
    <location>
        <begin position="30"/>
        <end position="133"/>
    </location>
</feature>
<feature type="active site" description="Nucleophile" evidence="1">
    <location>
        <position position="59"/>
    </location>
</feature>
<feature type="active site" description="Nucleophile" evidence="1">
    <location>
        <position position="62"/>
    </location>
</feature>
<feature type="site" description="Deprotonates C-terminal active site Cys" evidence="1">
    <location>
        <position position="53"/>
    </location>
</feature>
<feature type="site" description="Contributes to redox potential value" evidence="1">
    <location>
        <position position="60"/>
    </location>
</feature>
<feature type="site" description="Contributes to redox potential value" evidence="1">
    <location>
        <position position="61"/>
    </location>
</feature>
<feature type="disulfide bond" description="Redox-active" evidence="3">
    <location>
        <begin position="59"/>
        <end position="62"/>
    </location>
</feature>
<accession>O94504</accession>
<name>TRX2_SCHPO</name>
<protein>
    <recommendedName>
        <fullName>Thioredoxin-2, mitochondrial</fullName>
        <shortName>Trx-2</shortName>
    </recommendedName>
</protein>